<protein>
    <recommendedName>
        <fullName>Dihydrolipoyl dehydrogenase</fullName>
        <ecNumber>1.8.1.4</ecNumber>
    </recommendedName>
    <alternativeName>
        <fullName>Dihydrolipoamide dehydrogenase</fullName>
    </alternativeName>
    <alternativeName>
        <fullName>E3 component of pyruvate and 2-oxoglutarate dehydrogenases complexes</fullName>
    </alternativeName>
</protein>
<proteinExistence type="inferred from homology"/>
<accession>P50970</accession>
<accession>P96191</accession>
<accession>Q5NQ69</accession>
<organism>
    <name type="scientific">Zymomonas mobilis subsp. mobilis (strain ATCC 31821 / ZM4 / CP4)</name>
    <dbReference type="NCBI Taxonomy" id="264203"/>
    <lineage>
        <taxon>Bacteria</taxon>
        <taxon>Pseudomonadati</taxon>
        <taxon>Pseudomonadota</taxon>
        <taxon>Alphaproteobacteria</taxon>
        <taxon>Sphingomonadales</taxon>
        <taxon>Zymomonadaceae</taxon>
        <taxon>Zymomonas</taxon>
    </lineage>
</organism>
<name>DLDH_ZYMMO</name>
<evidence type="ECO:0000250" key="1"/>
<evidence type="ECO:0000305" key="2"/>
<keyword id="KW-0963">Cytoplasm</keyword>
<keyword id="KW-1015">Disulfide bond</keyword>
<keyword id="KW-0274">FAD</keyword>
<keyword id="KW-0285">Flavoprotein</keyword>
<keyword id="KW-0520">NAD</keyword>
<keyword id="KW-0560">Oxidoreductase</keyword>
<keyword id="KW-0676">Redox-active center</keyword>
<keyword id="KW-1185">Reference proteome</keyword>
<dbReference type="EC" id="1.8.1.4"/>
<dbReference type="EMBL" id="X82291">
    <property type="protein sequence ID" value="CAA57734.1"/>
    <property type="molecule type" value="Genomic_DNA"/>
</dbReference>
<dbReference type="EMBL" id="X93605">
    <property type="protein sequence ID" value="CAA63810.1"/>
    <property type="molecule type" value="Genomic_DNA"/>
</dbReference>
<dbReference type="EMBL" id="AE008692">
    <property type="protein sequence ID" value="AAV89136.1"/>
    <property type="molecule type" value="Genomic_DNA"/>
</dbReference>
<dbReference type="PIR" id="S57635">
    <property type="entry name" value="S57635"/>
</dbReference>
<dbReference type="SMR" id="P50970"/>
<dbReference type="STRING" id="264203.ZMO0512"/>
<dbReference type="KEGG" id="zmo:ZMO0512"/>
<dbReference type="eggNOG" id="COG1249">
    <property type="taxonomic scope" value="Bacteria"/>
</dbReference>
<dbReference type="HOGENOM" id="CLU_016755_0_2_5"/>
<dbReference type="BRENDA" id="1.8.1.4">
    <property type="organism ID" value="6765"/>
</dbReference>
<dbReference type="Proteomes" id="UP000001173">
    <property type="component" value="Chromosome"/>
</dbReference>
<dbReference type="GO" id="GO:0005737">
    <property type="term" value="C:cytoplasm"/>
    <property type="evidence" value="ECO:0007669"/>
    <property type="project" value="UniProtKB-SubCell"/>
</dbReference>
<dbReference type="GO" id="GO:0004148">
    <property type="term" value="F:dihydrolipoyl dehydrogenase (NADH) activity"/>
    <property type="evidence" value="ECO:0007669"/>
    <property type="project" value="UniProtKB-EC"/>
</dbReference>
<dbReference type="GO" id="GO:0050660">
    <property type="term" value="F:flavin adenine dinucleotide binding"/>
    <property type="evidence" value="ECO:0007669"/>
    <property type="project" value="InterPro"/>
</dbReference>
<dbReference type="GO" id="GO:0006103">
    <property type="term" value="P:2-oxoglutarate metabolic process"/>
    <property type="evidence" value="ECO:0007669"/>
    <property type="project" value="TreeGrafter"/>
</dbReference>
<dbReference type="FunFam" id="3.30.390.30:FF:000001">
    <property type="entry name" value="Dihydrolipoyl dehydrogenase"/>
    <property type="match status" value="1"/>
</dbReference>
<dbReference type="Gene3D" id="3.30.390.30">
    <property type="match status" value="1"/>
</dbReference>
<dbReference type="Gene3D" id="3.50.50.60">
    <property type="entry name" value="FAD/NAD(P)-binding domain"/>
    <property type="match status" value="2"/>
</dbReference>
<dbReference type="InterPro" id="IPR050151">
    <property type="entry name" value="Class-I_Pyr_Nuc-Dis_Oxidored"/>
</dbReference>
<dbReference type="InterPro" id="IPR036188">
    <property type="entry name" value="FAD/NAD-bd_sf"/>
</dbReference>
<dbReference type="InterPro" id="IPR023753">
    <property type="entry name" value="FAD/NAD-binding_dom"/>
</dbReference>
<dbReference type="InterPro" id="IPR016156">
    <property type="entry name" value="FAD/NAD-linked_Rdtase_dimer_sf"/>
</dbReference>
<dbReference type="InterPro" id="IPR006258">
    <property type="entry name" value="Lipoamide_DH"/>
</dbReference>
<dbReference type="InterPro" id="IPR001100">
    <property type="entry name" value="Pyr_nuc-diS_OxRdtase"/>
</dbReference>
<dbReference type="InterPro" id="IPR004099">
    <property type="entry name" value="Pyr_nucl-diS_OxRdtase_dimer"/>
</dbReference>
<dbReference type="InterPro" id="IPR012999">
    <property type="entry name" value="Pyr_OxRdtase_I_AS"/>
</dbReference>
<dbReference type="NCBIfam" id="TIGR01350">
    <property type="entry name" value="lipoamide_DH"/>
    <property type="match status" value="1"/>
</dbReference>
<dbReference type="PANTHER" id="PTHR22912:SF217">
    <property type="entry name" value="DIHYDROLIPOYL DEHYDROGENASE"/>
    <property type="match status" value="1"/>
</dbReference>
<dbReference type="PANTHER" id="PTHR22912">
    <property type="entry name" value="DISULFIDE OXIDOREDUCTASE"/>
    <property type="match status" value="1"/>
</dbReference>
<dbReference type="Pfam" id="PF07992">
    <property type="entry name" value="Pyr_redox_2"/>
    <property type="match status" value="1"/>
</dbReference>
<dbReference type="Pfam" id="PF02852">
    <property type="entry name" value="Pyr_redox_dim"/>
    <property type="match status" value="1"/>
</dbReference>
<dbReference type="PIRSF" id="PIRSF000350">
    <property type="entry name" value="Mercury_reductase_MerA"/>
    <property type="match status" value="1"/>
</dbReference>
<dbReference type="PRINTS" id="PR00368">
    <property type="entry name" value="FADPNR"/>
</dbReference>
<dbReference type="PRINTS" id="PR00411">
    <property type="entry name" value="PNDRDTASEI"/>
</dbReference>
<dbReference type="SUPFAM" id="SSF51905">
    <property type="entry name" value="FAD/NAD(P)-binding domain"/>
    <property type="match status" value="1"/>
</dbReference>
<dbReference type="SUPFAM" id="SSF55424">
    <property type="entry name" value="FAD/NAD-linked reductases, dimerisation (C-terminal) domain"/>
    <property type="match status" value="1"/>
</dbReference>
<dbReference type="PROSITE" id="PS00076">
    <property type="entry name" value="PYRIDINE_REDOX_1"/>
    <property type="match status" value="1"/>
</dbReference>
<sequence length="466" mass="49746">MADHFDLIVLGGGPGGYVAAIRAAQLNLKVALVERVHLGGICLNWGCIPTKSLLRSAEVYHEMQNAEAYGLTSFKPDFDLDKIIARSREVATRLASGVKTLLRKNKVEVISGVGQLTGNQQMLVETTEGEEKILEAKDIIIATGARARQLPNVHSDGKHIWTYHHALKPPAMPKKLLVIGSGAIGIEFASFYADFGAEVSIVEHAPQILPMEDAEVSAYVAKAFKKRGIRILTQSALQNLTPDDEGVTAEIAGADGKVTKERFSHAIVAIGVVANVENIGLDKLGIKLDRGFIAVDGFGRTNVDHVWAIGDVAGAPCLAHKASHQGVIAAEAIAGCDHVHPLNTQNIPGCTYARPQVASVGLTEEKARQQGYNVKIGNFPFIANGKAIAQGATDGFVKTVFDADSGALLGAHMVGAEVTEMIQGYTVARTLETTEAEIMETIFPHPTLSEAMHESVLAAYGRALHF</sequence>
<feature type="chain" id="PRO_0000068054" description="Dihydrolipoyl dehydrogenase">
    <location>
        <begin position="1"/>
        <end position="466"/>
    </location>
</feature>
<feature type="active site" description="Proton acceptor" evidence="1">
    <location>
        <position position="445"/>
    </location>
</feature>
<feature type="binding site" evidence="1">
    <location>
        <begin position="34"/>
        <end position="42"/>
    </location>
    <ligand>
        <name>FAD</name>
        <dbReference type="ChEBI" id="CHEBI:57692"/>
    </ligand>
</feature>
<feature type="binding site" evidence="1">
    <location>
        <position position="51"/>
    </location>
    <ligand>
        <name>FAD</name>
        <dbReference type="ChEBI" id="CHEBI:57692"/>
    </ligand>
</feature>
<feature type="binding site" evidence="1">
    <location>
        <position position="114"/>
    </location>
    <ligand>
        <name>FAD</name>
        <dbReference type="ChEBI" id="CHEBI:57692"/>
    </ligand>
</feature>
<feature type="binding site" evidence="1">
    <location>
        <begin position="180"/>
        <end position="184"/>
    </location>
    <ligand>
        <name>NAD(+)</name>
        <dbReference type="ChEBI" id="CHEBI:57540"/>
    </ligand>
</feature>
<feature type="binding site" evidence="1">
    <location>
        <position position="203"/>
    </location>
    <ligand>
        <name>NAD(+)</name>
        <dbReference type="ChEBI" id="CHEBI:57540"/>
    </ligand>
</feature>
<feature type="binding site" evidence="1">
    <location>
        <begin position="269"/>
        <end position="272"/>
    </location>
    <ligand>
        <name>NAD(+)</name>
        <dbReference type="ChEBI" id="CHEBI:57540"/>
    </ligand>
</feature>
<feature type="binding site" evidence="1">
    <location>
        <position position="311"/>
    </location>
    <ligand>
        <name>FAD</name>
        <dbReference type="ChEBI" id="CHEBI:57692"/>
    </ligand>
</feature>
<feature type="binding site" evidence="1">
    <location>
        <position position="319"/>
    </location>
    <ligand>
        <name>FAD</name>
        <dbReference type="ChEBI" id="CHEBI:57692"/>
    </ligand>
</feature>
<feature type="disulfide bond" description="Redox-active" evidence="1">
    <location>
        <begin position="42"/>
        <end position="47"/>
    </location>
</feature>
<feature type="sequence conflict" description="In Ref. 1 and 2." evidence="2" ref="1 2">
    <original>T</original>
    <variation>A</variation>
    <location>
        <position position="92"/>
    </location>
</feature>
<feature type="sequence conflict" description="In Ref. 1 and 2." evidence="2" ref="1 2">
    <original>L</original>
    <variation>R</variation>
    <location>
        <position position="123"/>
    </location>
</feature>
<feature type="sequence conflict" description="In Ref. 1 and 2." evidence="2" ref="1 2">
    <original>F</original>
    <variation>L</variation>
    <location>
        <position position="191"/>
    </location>
</feature>
<feature type="sequence conflict" description="In Ref. 1 and 2." evidence="2" ref="1 2">
    <original>A</original>
    <variation>D</variation>
    <location>
        <position position="332"/>
    </location>
</feature>
<feature type="sequence conflict" description="In Ref. 1 and 2." evidence="2" ref="1 2">
    <original>Q</original>
    <variation>H</variation>
    <location>
        <position position="423"/>
    </location>
</feature>
<comment type="function">
    <text evidence="1">Lipoamide dehydrogenase is a component of the alpha-ketoacid dehydrogenase complexes.</text>
</comment>
<comment type="catalytic activity">
    <reaction>
        <text>N(6)-[(R)-dihydrolipoyl]-L-lysyl-[protein] + NAD(+) = N(6)-[(R)-lipoyl]-L-lysyl-[protein] + NADH + H(+)</text>
        <dbReference type="Rhea" id="RHEA:15045"/>
        <dbReference type="Rhea" id="RHEA-COMP:10474"/>
        <dbReference type="Rhea" id="RHEA-COMP:10475"/>
        <dbReference type="ChEBI" id="CHEBI:15378"/>
        <dbReference type="ChEBI" id="CHEBI:57540"/>
        <dbReference type="ChEBI" id="CHEBI:57945"/>
        <dbReference type="ChEBI" id="CHEBI:83099"/>
        <dbReference type="ChEBI" id="CHEBI:83100"/>
        <dbReference type="EC" id="1.8.1.4"/>
    </reaction>
</comment>
<comment type="cofactor">
    <cofactor evidence="1">
        <name>FAD</name>
        <dbReference type="ChEBI" id="CHEBI:57692"/>
    </cofactor>
    <text evidence="1">Binds 1 FAD per subunit.</text>
</comment>
<comment type="subunit">
    <text evidence="1">Homodimer.</text>
</comment>
<comment type="subcellular location">
    <subcellularLocation>
        <location>Cytoplasm</location>
    </subcellularLocation>
</comment>
<comment type="miscellaneous">
    <text>The active site is a redox-active disulfide bond.</text>
</comment>
<comment type="similarity">
    <text evidence="2">Belongs to the class-I pyridine nucleotide-disulfide oxidoreductase family.</text>
</comment>
<reference key="1">
    <citation type="book" date="1996" name="Biochemistry and physiology of thiamin diphosphate enzymes">
        <title>Cloning, sequencing and expression of the Zymomonas mobilis dihydrolipoamide dehydrogenase gene (lpd) in Escherichia coli.</title>
        <editorList>
            <person name="Bisswanger H."/>
            <person name="Schellenberger A."/>
        </editorList>
        <authorList>
            <person name="Bringer-Meyer S."/>
            <person name="Neveling U."/>
            <person name="Klasen R."/>
            <person name="Sahm H."/>
        </authorList>
    </citation>
    <scope>NUCLEOTIDE SEQUENCE [GENOMIC DNA]</scope>
    <source>
        <strain>ATCC 29191 / DSM 3580 / JCM 10190 / CECT 560 / NBRC 13756 / NCIMB 11199 / NRRL B-4490 / ZM6</strain>
    </source>
</reference>
<reference key="2">
    <citation type="journal article" date="1998" name="J. Bacteriol.">
        <title>Purification of the pyruvate dehydrogenase multienzyme complex of Zymomonas mobilis and identification and sequence analysis of the corresponding genes.</title>
        <authorList>
            <person name="Neveling U."/>
            <person name="Klasen R."/>
            <person name="Bringer-Meyer S."/>
            <person name="Sahm H."/>
        </authorList>
    </citation>
    <scope>NUCLEOTIDE SEQUENCE [GENOMIC DNA]</scope>
    <source>
        <strain>ATCC 29191 / DSM 3580 / JCM 10190 / CECT 560 / NBRC 13756 / NCIMB 11199 / NRRL B-4490 / ZM6</strain>
    </source>
</reference>
<reference key="3">
    <citation type="journal article" date="2005" name="Nat. Biotechnol.">
        <title>The genome sequence of the ethanologenic bacterium Zymomonas mobilis ZM4.</title>
        <authorList>
            <person name="Seo J.-S."/>
            <person name="Chong H."/>
            <person name="Park H.S."/>
            <person name="Yoon K.-O."/>
            <person name="Jung C."/>
            <person name="Kim J.J."/>
            <person name="Hong J.H."/>
            <person name="Kim H."/>
            <person name="Kim J.-H."/>
            <person name="Kil J.-I."/>
            <person name="Park C.J."/>
            <person name="Oh H.-M."/>
            <person name="Lee J.-S."/>
            <person name="Jin S.-J."/>
            <person name="Um H.-W."/>
            <person name="Lee H.-J."/>
            <person name="Oh S.-J."/>
            <person name="Kim J.Y."/>
            <person name="Kang H.L."/>
            <person name="Lee S.Y."/>
            <person name="Lee K.J."/>
            <person name="Kang H.S."/>
        </authorList>
    </citation>
    <scope>NUCLEOTIDE SEQUENCE [LARGE SCALE GENOMIC DNA]</scope>
    <source>
        <strain>ATCC 31821 / ZM4 / CP4</strain>
    </source>
</reference>
<gene>
    <name type="primary">lpd</name>
    <name type="ordered locus">ZMO0512</name>
</gene>